<feature type="chain" id="PRO_0000317921" description="Ubiquitin-like-conjugating enzyme ATG10">
    <location>
        <begin position="1"/>
        <end position="149"/>
    </location>
</feature>
<feature type="active site" description="Glycyl thioester intermediate" evidence="1">
    <location>
        <position position="120"/>
    </location>
</feature>
<comment type="function">
    <text evidence="1 2">E2-like enzyme required for the cytoplasm to vacuole transport (Cvt), autophagy and nucleophagy. Acts as an E2-like enzyme that catalyzes the conjugation of ATG12 to ATG5. ATG12 conjugation to ATG5 is required for proper localization of ATG8 to the preautophagosomal structure (PAS). Likely serves as an ATG5-recognition molecule (By similarity).</text>
</comment>
<comment type="subunit">
    <text evidence="1">Forms homooligomers.</text>
</comment>
<comment type="subcellular location">
    <subcellularLocation>
        <location evidence="1">Preautophagosomal structure membrane</location>
        <topology evidence="1">Peripheral membrane protein</topology>
    </subcellularLocation>
</comment>
<comment type="similarity">
    <text evidence="3">Belongs to the ATG10 family.</text>
</comment>
<reference key="1">
    <citation type="journal article" date="2007" name="Autophagy">
        <title>ATG genes involved in non-selective autophagy are conserved from yeast to man, but the selective Cvt and pexophagy pathways also require organism-specific genes.</title>
        <authorList>
            <person name="Meijer W.H."/>
            <person name="van der Klei I.J."/>
            <person name="Veenhuis M."/>
            <person name="Kiel J.A.K.W."/>
        </authorList>
    </citation>
    <scope>NUCLEOTIDE SEQUENCE [GENOMIC DNA]</scope>
    <scope>FUNCTION</scope>
    <source>
        <strain>ATCC 34438 / CBS 4732 / DSM 70277 / JCM 3621 / NBRC 1476 / NRRL Y-5445</strain>
    </source>
</reference>
<keyword id="KW-0072">Autophagy</keyword>
<keyword id="KW-0472">Membrane</keyword>
<keyword id="KW-0653">Protein transport</keyword>
<keyword id="KW-0808">Transferase</keyword>
<keyword id="KW-0813">Transport</keyword>
<keyword id="KW-0833">Ubl conjugation pathway</keyword>
<proteinExistence type="inferred from homology"/>
<gene>
    <name type="primary">ATG10</name>
</gene>
<name>ATG10_PICAN</name>
<protein>
    <recommendedName>
        <fullName>Ubiquitin-like-conjugating enzyme ATG10</fullName>
        <ecNumber>2.3.2.-</ecNumber>
    </recommendedName>
    <alternativeName>
        <fullName>Autophagy-related protein 10</fullName>
    </alternativeName>
</protein>
<sequence length="149" mass="17444">MKENVFENNVAQLAHYIRHKCTNVRTERTVIFALACRDNIQLEIVVFYHQTYAAPLLTFRIWQLQVSDDIETRRLVFDQTLIDKLVTRNGSLRVDRRVDPAITLVDHPVLGKPFYQLHPCQSAQLLEDVALQGPESLEFWWNFYSSVLI</sequence>
<accession>A7KAI8</accession>
<organism>
    <name type="scientific">Pichia angusta</name>
    <name type="common">Yeast</name>
    <name type="synonym">Hansenula polymorpha</name>
    <dbReference type="NCBI Taxonomy" id="870730"/>
    <lineage>
        <taxon>Eukaryota</taxon>
        <taxon>Fungi</taxon>
        <taxon>Dikarya</taxon>
        <taxon>Ascomycota</taxon>
        <taxon>Saccharomycotina</taxon>
        <taxon>Pichiomycetes</taxon>
        <taxon>Pichiales</taxon>
        <taxon>Pichiaceae</taxon>
        <taxon>Ogataea</taxon>
    </lineage>
</organism>
<evidence type="ECO:0000250" key="1"/>
<evidence type="ECO:0000269" key="2">
    <source>
    </source>
</evidence>
<evidence type="ECO:0000305" key="3"/>
<dbReference type="EC" id="2.3.2.-"/>
<dbReference type="EMBL" id="EF102889">
    <property type="protein sequence ID" value="ABO31293.1"/>
    <property type="molecule type" value="Genomic_DNA"/>
</dbReference>
<dbReference type="GO" id="GO:0034045">
    <property type="term" value="C:phagophore assembly site membrane"/>
    <property type="evidence" value="ECO:0007669"/>
    <property type="project" value="UniProtKB-SubCell"/>
</dbReference>
<dbReference type="GO" id="GO:0019787">
    <property type="term" value="F:ubiquitin-like protein transferase activity"/>
    <property type="evidence" value="ECO:0007669"/>
    <property type="project" value="InterPro"/>
</dbReference>
<dbReference type="GO" id="GO:0006914">
    <property type="term" value="P:autophagy"/>
    <property type="evidence" value="ECO:0007669"/>
    <property type="project" value="UniProtKB-KW"/>
</dbReference>
<dbReference type="GO" id="GO:0015031">
    <property type="term" value="P:protein transport"/>
    <property type="evidence" value="ECO:0007669"/>
    <property type="project" value="UniProtKB-KW"/>
</dbReference>
<dbReference type="Gene3D" id="3.30.1460.50">
    <property type="match status" value="1"/>
</dbReference>
<dbReference type="InterPro" id="IPR007135">
    <property type="entry name" value="Atg3/Atg10"/>
</dbReference>
<dbReference type="Pfam" id="PF03987">
    <property type="entry name" value="Autophagy_act_C"/>
    <property type="match status" value="1"/>
</dbReference>